<dbReference type="EC" id="6.1.1.10" evidence="1"/>
<dbReference type="EMBL" id="CP000388">
    <property type="protein sequence ID" value="ABG40417.1"/>
    <property type="molecule type" value="Genomic_DNA"/>
</dbReference>
<dbReference type="RefSeq" id="WP_011574713.1">
    <property type="nucleotide sequence ID" value="NC_008228.1"/>
</dbReference>
<dbReference type="SMR" id="Q15UM1"/>
<dbReference type="STRING" id="342610.Patl_1897"/>
<dbReference type="KEGG" id="pat:Patl_1897"/>
<dbReference type="eggNOG" id="COG0073">
    <property type="taxonomic scope" value="Bacteria"/>
</dbReference>
<dbReference type="eggNOG" id="COG0143">
    <property type="taxonomic scope" value="Bacteria"/>
</dbReference>
<dbReference type="HOGENOM" id="CLU_009710_7_0_6"/>
<dbReference type="OrthoDB" id="9810191at2"/>
<dbReference type="Proteomes" id="UP000001981">
    <property type="component" value="Chromosome"/>
</dbReference>
<dbReference type="GO" id="GO:0005829">
    <property type="term" value="C:cytosol"/>
    <property type="evidence" value="ECO:0007669"/>
    <property type="project" value="TreeGrafter"/>
</dbReference>
<dbReference type="GO" id="GO:0005524">
    <property type="term" value="F:ATP binding"/>
    <property type="evidence" value="ECO:0007669"/>
    <property type="project" value="UniProtKB-UniRule"/>
</dbReference>
<dbReference type="GO" id="GO:0046872">
    <property type="term" value="F:metal ion binding"/>
    <property type="evidence" value="ECO:0007669"/>
    <property type="project" value="UniProtKB-KW"/>
</dbReference>
<dbReference type="GO" id="GO:0004825">
    <property type="term" value="F:methionine-tRNA ligase activity"/>
    <property type="evidence" value="ECO:0007669"/>
    <property type="project" value="UniProtKB-UniRule"/>
</dbReference>
<dbReference type="GO" id="GO:0000049">
    <property type="term" value="F:tRNA binding"/>
    <property type="evidence" value="ECO:0007669"/>
    <property type="project" value="UniProtKB-KW"/>
</dbReference>
<dbReference type="GO" id="GO:0006431">
    <property type="term" value="P:methionyl-tRNA aminoacylation"/>
    <property type="evidence" value="ECO:0007669"/>
    <property type="project" value="UniProtKB-UniRule"/>
</dbReference>
<dbReference type="CDD" id="cd07957">
    <property type="entry name" value="Anticodon_Ia_Met"/>
    <property type="match status" value="1"/>
</dbReference>
<dbReference type="CDD" id="cd00814">
    <property type="entry name" value="MetRS_core"/>
    <property type="match status" value="1"/>
</dbReference>
<dbReference type="CDD" id="cd02800">
    <property type="entry name" value="tRNA_bind_EcMetRS_like"/>
    <property type="match status" value="1"/>
</dbReference>
<dbReference type="FunFam" id="1.10.730.10:FF:000005">
    <property type="entry name" value="Methionine--tRNA ligase"/>
    <property type="match status" value="1"/>
</dbReference>
<dbReference type="FunFam" id="2.20.28.20:FF:000001">
    <property type="entry name" value="Methionine--tRNA ligase"/>
    <property type="match status" value="1"/>
</dbReference>
<dbReference type="FunFam" id="2.40.50.140:FF:000042">
    <property type="entry name" value="Methionine--tRNA ligase"/>
    <property type="match status" value="1"/>
</dbReference>
<dbReference type="Gene3D" id="3.40.50.620">
    <property type="entry name" value="HUPs"/>
    <property type="match status" value="1"/>
</dbReference>
<dbReference type="Gene3D" id="1.10.730.10">
    <property type="entry name" value="Isoleucyl-tRNA Synthetase, Domain 1"/>
    <property type="match status" value="1"/>
</dbReference>
<dbReference type="Gene3D" id="2.20.28.20">
    <property type="entry name" value="Methionyl-tRNA synthetase, Zn-domain"/>
    <property type="match status" value="1"/>
</dbReference>
<dbReference type="Gene3D" id="2.40.50.140">
    <property type="entry name" value="Nucleic acid-binding proteins"/>
    <property type="match status" value="1"/>
</dbReference>
<dbReference type="HAMAP" id="MF_00098">
    <property type="entry name" value="Met_tRNA_synth_type1"/>
    <property type="match status" value="1"/>
</dbReference>
<dbReference type="InterPro" id="IPR001412">
    <property type="entry name" value="aa-tRNA-synth_I_CS"/>
</dbReference>
<dbReference type="InterPro" id="IPR041872">
    <property type="entry name" value="Anticodon_Met"/>
</dbReference>
<dbReference type="InterPro" id="IPR004495">
    <property type="entry name" value="Met-tRNA-synth_bsu_C"/>
</dbReference>
<dbReference type="InterPro" id="IPR023458">
    <property type="entry name" value="Met-tRNA_ligase_1"/>
</dbReference>
<dbReference type="InterPro" id="IPR014758">
    <property type="entry name" value="Met-tRNA_synth"/>
</dbReference>
<dbReference type="InterPro" id="IPR015413">
    <property type="entry name" value="Methionyl/Leucyl_tRNA_Synth"/>
</dbReference>
<dbReference type="InterPro" id="IPR033911">
    <property type="entry name" value="MetRS_core"/>
</dbReference>
<dbReference type="InterPro" id="IPR029038">
    <property type="entry name" value="MetRS_Zn"/>
</dbReference>
<dbReference type="InterPro" id="IPR012340">
    <property type="entry name" value="NA-bd_OB-fold"/>
</dbReference>
<dbReference type="InterPro" id="IPR014729">
    <property type="entry name" value="Rossmann-like_a/b/a_fold"/>
</dbReference>
<dbReference type="InterPro" id="IPR002547">
    <property type="entry name" value="tRNA-bd_dom"/>
</dbReference>
<dbReference type="InterPro" id="IPR009080">
    <property type="entry name" value="tRNAsynth_Ia_anticodon-bd"/>
</dbReference>
<dbReference type="NCBIfam" id="TIGR00398">
    <property type="entry name" value="metG"/>
    <property type="match status" value="1"/>
</dbReference>
<dbReference type="NCBIfam" id="TIGR00399">
    <property type="entry name" value="metG_C_term"/>
    <property type="match status" value="1"/>
</dbReference>
<dbReference type="NCBIfam" id="NF001100">
    <property type="entry name" value="PRK00133.1"/>
    <property type="match status" value="1"/>
</dbReference>
<dbReference type="PANTHER" id="PTHR45765">
    <property type="entry name" value="METHIONINE--TRNA LIGASE"/>
    <property type="match status" value="1"/>
</dbReference>
<dbReference type="PANTHER" id="PTHR45765:SF1">
    <property type="entry name" value="METHIONINE--TRNA LIGASE, CYTOPLASMIC"/>
    <property type="match status" value="1"/>
</dbReference>
<dbReference type="Pfam" id="PF19303">
    <property type="entry name" value="Anticodon_3"/>
    <property type="match status" value="1"/>
</dbReference>
<dbReference type="Pfam" id="PF09334">
    <property type="entry name" value="tRNA-synt_1g"/>
    <property type="match status" value="1"/>
</dbReference>
<dbReference type="Pfam" id="PF01588">
    <property type="entry name" value="tRNA_bind"/>
    <property type="match status" value="1"/>
</dbReference>
<dbReference type="PRINTS" id="PR01041">
    <property type="entry name" value="TRNASYNTHMET"/>
</dbReference>
<dbReference type="SUPFAM" id="SSF47323">
    <property type="entry name" value="Anticodon-binding domain of a subclass of class I aminoacyl-tRNA synthetases"/>
    <property type="match status" value="1"/>
</dbReference>
<dbReference type="SUPFAM" id="SSF57770">
    <property type="entry name" value="Methionyl-tRNA synthetase (MetRS), Zn-domain"/>
    <property type="match status" value="1"/>
</dbReference>
<dbReference type="SUPFAM" id="SSF50249">
    <property type="entry name" value="Nucleic acid-binding proteins"/>
    <property type="match status" value="1"/>
</dbReference>
<dbReference type="SUPFAM" id="SSF52374">
    <property type="entry name" value="Nucleotidylyl transferase"/>
    <property type="match status" value="1"/>
</dbReference>
<dbReference type="PROSITE" id="PS00178">
    <property type="entry name" value="AA_TRNA_LIGASE_I"/>
    <property type="match status" value="1"/>
</dbReference>
<dbReference type="PROSITE" id="PS50886">
    <property type="entry name" value="TRBD"/>
    <property type="match status" value="1"/>
</dbReference>
<organism>
    <name type="scientific">Pseudoalteromonas atlantica (strain T6c / ATCC BAA-1087)</name>
    <dbReference type="NCBI Taxonomy" id="3042615"/>
    <lineage>
        <taxon>Bacteria</taxon>
        <taxon>Pseudomonadati</taxon>
        <taxon>Pseudomonadota</taxon>
        <taxon>Gammaproteobacteria</taxon>
        <taxon>Alteromonadales</taxon>
        <taxon>Alteromonadaceae</taxon>
        <taxon>Paraglaciecola</taxon>
    </lineage>
</organism>
<protein>
    <recommendedName>
        <fullName evidence="1">Methionine--tRNA ligase</fullName>
        <ecNumber evidence="1">6.1.1.10</ecNumber>
    </recommendedName>
    <alternativeName>
        <fullName evidence="1">Methionyl-tRNA synthetase</fullName>
        <shortName evidence="1">MetRS</shortName>
    </alternativeName>
</protein>
<name>SYM_PSEA6</name>
<accession>Q15UM1</accession>
<feature type="chain" id="PRO_0000331865" description="Methionine--tRNA ligase">
    <location>
        <begin position="1"/>
        <end position="675"/>
    </location>
</feature>
<feature type="domain" description="tRNA-binding" evidence="1">
    <location>
        <begin position="574"/>
        <end position="675"/>
    </location>
</feature>
<feature type="short sequence motif" description="'HIGH' region">
    <location>
        <begin position="15"/>
        <end position="25"/>
    </location>
</feature>
<feature type="short sequence motif" description="'KMSKS' region">
    <location>
        <begin position="331"/>
        <end position="335"/>
    </location>
</feature>
<feature type="binding site" evidence="1">
    <location>
        <position position="146"/>
    </location>
    <ligand>
        <name>Zn(2+)</name>
        <dbReference type="ChEBI" id="CHEBI:29105"/>
    </ligand>
</feature>
<feature type="binding site" evidence="1">
    <location>
        <position position="149"/>
    </location>
    <ligand>
        <name>Zn(2+)</name>
        <dbReference type="ChEBI" id="CHEBI:29105"/>
    </ligand>
</feature>
<feature type="binding site" evidence="1">
    <location>
        <position position="159"/>
    </location>
    <ligand>
        <name>Zn(2+)</name>
        <dbReference type="ChEBI" id="CHEBI:29105"/>
    </ligand>
</feature>
<feature type="binding site" evidence="1">
    <location>
        <position position="162"/>
    </location>
    <ligand>
        <name>Zn(2+)</name>
        <dbReference type="ChEBI" id="CHEBI:29105"/>
    </ligand>
</feature>
<feature type="binding site" evidence="1">
    <location>
        <position position="334"/>
    </location>
    <ligand>
        <name>ATP</name>
        <dbReference type="ChEBI" id="CHEBI:30616"/>
    </ligand>
</feature>
<proteinExistence type="inferred from homology"/>
<sequence length="675" mass="76009">MSSQPRKILVTSALPYANGSIHLGHLLEHIQTDIWTRFQRMCGHEIYSVCADDAHGTPVMLKAQELGITPEEMVARTREEHHQDLLDFFVEYDNYHVTHSDENKELSELIYNRLNDAGYISKRTISQLFDPEKNMFLPDRFVKGTCPSCGAEDQNGDSCDNCGATYDPTEMKNPRSVVSGATPILKDSEHFFFDLPQFSDMLQNWLKSDALQSEISNKLEEWFEKGLQQWDISRDAPYFGFEIPGAPNKFFYVWVDAPVGYMASFKNLCDRSGINFDEYWGADSDAELYHFIGKDITYFHCLFWPAMLEGAGFRKPTGVNVHGFVTVNGAKMSKSKGTFIKGRTYLEHLNPEYLRYYFASKLGANVTDIDLNFEDFAQKVNSDLVGKVVNIASRCASFITKRFDGKLSDNVLEPALVAEFQHAQASIAQAFEERQYHKAIREIMALADKANQFIDANAPWVTIKDESKQAFTHDVCSLGINLFRLLMVYLKPVVPKLAEQAEAFLNDDLSWSSAQSVLTGHEINKFKALMQRVDMDKVNAMVDDSKENLAPTVTLDPNSPLAKDPISDTIEFDDFAKIDLRIAKIVVAEHVEKADKLLRLELDLGGETRQVFAGIKSAYQPEDLVGKLTVMVANLAPRKMRFGMSEGMVLAAGPGGKDLWIMEPHEGAQPGMKVK</sequence>
<comment type="function">
    <text evidence="1">Is required not only for elongation of protein synthesis but also for the initiation of all mRNA translation through initiator tRNA(fMet) aminoacylation.</text>
</comment>
<comment type="catalytic activity">
    <reaction evidence="1">
        <text>tRNA(Met) + L-methionine + ATP = L-methionyl-tRNA(Met) + AMP + diphosphate</text>
        <dbReference type="Rhea" id="RHEA:13481"/>
        <dbReference type="Rhea" id="RHEA-COMP:9667"/>
        <dbReference type="Rhea" id="RHEA-COMP:9698"/>
        <dbReference type="ChEBI" id="CHEBI:30616"/>
        <dbReference type="ChEBI" id="CHEBI:33019"/>
        <dbReference type="ChEBI" id="CHEBI:57844"/>
        <dbReference type="ChEBI" id="CHEBI:78442"/>
        <dbReference type="ChEBI" id="CHEBI:78530"/>
        <dbReference type="ChEBI" id="CHEBI:456215"/>
        <dbReference type="EC" id="6.1.1.10"/>
    </reaction>
</comment>
<comment type="cofactor">
    <cofactor evidence="1">
        <name>Zn(2+)</name>
        <dbReference type="ChEBI" id="CHEBI:29105"/>
    </cofactor>
    <text evidence="1">Binds 1 zinc ion per subunit.</text>
</comment>
<comment type="subunit">
    <text evidence="1">Homodimer.</text>
</comment>
<comment type="subcellular location">
    <subcellularLocation>
        <location evidence="1">Cytoplasm</location>
    </subcellularLocation>
</comment>
<comment type="similarity">
    <text evidence="1">Belongs to the class-I aminoacyl-tRNA synthetase family. MetG type 1 subfamily.</text>
</comment>
<evidence type="ECO:0000255" key="1">
    <source>
        <dbReference type="HAMAP-Rule" id="MF_00098"/>
    </source>
</evidence>
<keyword id="KW-0030">Aminoacyl-tRNA synthetase</keyword>
<keyword id="KW-0067">ATP-binding</keyword>
<keyword id="KW-0963">Cytoplasm</keyword>
<keyword id="KW-0436">Ligase</keyword>
<keyword id="KW-0479">Metal-binding</keyword>
<keyword id="KW-0547">Nucleotide-binding</keyword>
<keyword id="KW-0648">Protein biosynthesis</keyword>
<keyword id="KW-0694">RNA-binding</keyword>
<keyword id="KW-0820">tRNA-binding</keyword>
<keyword id="KW-0862">Zinc</keyword>
<gene>
    <name evidence="1" type="primary">metG</name>
    <name type="ordered locus">Patl_1897</name>
</gene>
<reference key="1">
    <citation type="submission" date="2006-06" db="EMBL/GenBank/DDBJ databases">
        <title>Complete sequence of Pseudoalteromonas atlantica T6c.</title>
        <authorList>
            <consortium name="US DOE Joint Genome Institute"/>
            <person name="Copeland A."/>
            <person name="Lucas S."/>
            <person name="Lapidus A."/>
            <person name="Barry K."/>
            <person name="Detter J.C."/>
            <person name="Glavina del Rio T."/>
            <person name="Hammon N."/>
            <person name="Israni S."/>
            <person name="Dalin E."/>
            <person name="Tice H."/>
            <person name="Pitluck S."/>
            <person name="Saunders E."/>
            <person name="Brettin T."/>
            <person name="Bruce D."/>
            <person name="Han C."/>
            <person name="Tapia R."/>
            <person name="Gilna P."/>
            <person name="Schmutz J."/>
            <person name="Larimer F."/>
            <person name="Land M."/>
            <person name="Hauser L."/>
            <person name="Kyrpides N."/>
            <person name="Kim E."/>
            <person name="Karls A.C."/>
            <person name="Bartlett D."/>
            <person name="Higgins B.P."/>
            <person name="Richardson P."/>
        </authorList>
    </citation>
    <scope>NUCLEOTIDE SEQUENCE [LARGE SCALE GENOMIC DNA]</scope>
    <source>
        <strain>T6c / ATCC BAA-1087</strain>
    </source>
</reference>